<proteinExistence type="inferred from homology"/>
<accession>Q8XJW5</accession>
<feature type="chain" id="PRO_1000059338" description="V-type ATP synthase alpha chain">
    <location>
        <begin position="1"/>
        <end position="591"/>
    </location>
</feature>
<feature type="binding site" evidence="1">
    <location>
        <begin position="232"/>
        <end position="239"/>
    </location>
    <ligand>
        <name>ATP</name>
        <dbReference type="ChEBI" id="CHEBI:30616"/>
    </ligand>
</feature>
<dbReference type="EC" id="7.1.2.2" evidence="1"/>
<dbReference type="EMBL" id="BA000016">
    <property type="protein sequence ID" value="BAB81344.1"/>
    <property type="molecule type" value="Genomic_DNA"/>
</dbReference>
<dbReference type="RefSeq" id="WP_003449648.1">
    <property type="nucleotide sequence ID" value="NC_003366.1"/>
</dbReference>
<dbReference type="SMR" id="Q8XJW5"/>
<dbReference type="STRING" id="195102.gene:10490902"/>
<dbReference type="KEGG" id="cpe:CPE1638"/>
<dbReference type="HOGENOM" id="CLU_008162_3_1_9"/>
<dbReference type="Proteomes" id="UP000000818">
    <property type="component" value="Chromosome"/>
</dbReference>
<dbReference type="GO" id="GO:0045259">
    <property type="term" value="C:proton-transporting ATP synthase complex"/>
    <property type="evidence" value="ECO:0007669"/>
    <property type="project" value="UniProtKB-ARBA"/>
</dbReference>
<dbReference type="GO" id="GO:0005524">
    <property type="term" value="F:ATP binding"/>
    <property type="evidence" value="ECO:0007669"/>
    <property type="project" value="UniProtKB-UniRule"/>
</dbReference>
<dbReference type="GO" id="GO:0046933">
    <property type="term" value="F:proton-transporting ATP synthase activity, rotational mechanism"/>
    <property type="evidence" value="ECO:0007669"/>
    <property type="project" value="UniProtKB-UniRule"/>
</dbReference>
<dbReference type="GO" id="GO:0046961">
    <property type="term" value="F:proton-transporting ATPase activity, rotational mechanism"/>
    <property type="evidence" value="ECO:0007669"/>
    <property type="project" value="InterPro"/>
</dbReference>
<dbReference type="GO" id="GO:0042777">
    <property type="term" value="P:proton motive force-driven plasma membrane ATP synthesis"/>
    <property type="evidence" value="ECO:0007669"/>
    <property type="project" value="UniProtKB-UniRule"/>
</dbReference>
<dbReference type="CDD" id="cd18111">
    <property type="entry name" value="ATP-synt_V_A-type_alpha_C"/>
    <property type="match status" value="1"/>
</dbReference>
<dbReference type="CDD" id="cd18119">
    <property type="entry name" value="ATP-synt_V_A-type_alpha_N"/>
    <property type="match status" value="1"/>
</dbReference>
<dbReference type="CDD" id="cd01134">
    <property type="entry name" value="V_A-ATPase_A"/>
    <property type="match status" value="1"/>
</dbReference>
<dbReference type="FunFam" id="2.40.30.20:FF:000002">
    <property type="entry name" value="V-type proton ATPase catalytic subunit A"/>
    <property type="match status" value="1"/>
</dbReference>
<dbReference type="FunFam" id="2.40.50.100:FF:000008">
    <property type="entry name" value="V-type proton ATPase catalytic subunit A"/>
    <property type="match status" value="1"/>
</dbReference>
<dbReference type="Gene3D" id="2.40.30.20">
    <property type="match status" value="1"/>
</dbReference>
<dbReference type="Gene3D" id="2.40.50.100">
    <property type="match status" value="1"/>
</dbReference>
<dbReference type="Gene3D" id="1.10.1140.10">
    <property type="entry name" value="Bovine Mitochondrial F1-atpase, Atp Synthase Beta Chain, Chain D, domain 3"/>
    <property type="match status" value="1"/>
</dbReference>
<dbReference type="Gene3D" id="3.40.50.300">
    <property type="entry name" value="P-loop containing nucleotide triphosphate hydrolases"/>
    <property type="match status" value="1"/>
</dbReference>
<dbReference type="HAMAP" id="MF_00309">
    <property type="entry name" value="ATP_synth_A_arch"/>
    <property type="match status" value="1"/>
</dbReference>
<dbReference type="InterPro" id="IPR055190">
    <property type="entry name" value="ATP-synt_VA_C"/>
</dbReference>
<dbReference type="InterPro" id="IPR031686">
    <property type="entry name" value="ATP-synth_a_Xtn"/>
</dbReference>
<dbReference type="InterPro" id="IPR023366">
    <property type="entry name" value="ATP_synth_asu-like_sf"/>
</dbReference>
<dbReference type="InterPro" id="IPR020003">
    <property type="entry name" value="ATPase_a/bsu_AS"/>
</dbReference>
<dbReference type="InterPro" id="IPR004100">
    <property type="entry name" value="ATPase_F1/V1/A1_a/bsu_N"/>
</dbReference>
<dbReference type="InterPro" id="IPR036121">
    <property type="entry name" value="ATPase_F1/V1/A1_a/bsu_N_sf"/>
</dbReference>
<dbReference type="InterPro" id="IPR000194">
    <property type="entry name" value="ATPase_F1/V1/A1_a/bsu_nucl-bd"/>
</dbReference>
<dbReference type="InterPro" id="IPR024034">
    <property type="entry name" value="ATPase_F1/V1_b/a_C"/>
</dbReference>
<dbReference type="InterPro" id="IPR027417">
    <property type="entry name" value="P-loop_NTPase"/>
</dbReference>
<dbReference type="InterPro" id="IPR022878">
    <property type="entry name" value="V-ATPase_asu"/>
</dbReference>
<dbReference type="NCBIfam" id="NF003220">
    <property type="entry name" value="PRK04192.1"/>
    <property type="match status" value="1"/>
</dbReference>
<dbReference type="PANTHER" id="PTHR43607:SF1">
    <property type="entry name" value="H(+)-TRANSPORTING TWO-SECTOR ATPASE"/>
    <property type="match status" value="1"/>
</dbReference>
<dbReference type="PANTHER" id="PTHR43607">
    <property type="entry name" value="V-TYPE PROTON ATPASE CATALYTIC SUBUNIT A"/>
    <property type="match status" value="1"/>
</dbReference>
<dbReference type="Pfam" id="PF00006">
    <property type="entry name" value="ATP-synt_ab"/>
    <property type="match status" value="1"/>
</dbReference>
<dbReference type="Pfam" id="PF02874">
    <property type="entry name" value="ATP-synt_ab_N"/>
    <property type="match status" value="1"/>
</dbReference>
<dbReference type="Pfam" id="PF16886">
    <property type="entry name" value="ATP-synt_ab_Xtn"/>
    <property type="match status" value="1"/>
</dbReference>
<dbReference type="Pfam" id="PF22919">
    <property type="entry name" value="ATP-synt_VA_C"/>
    <property type="match status" value="1"/>
</dbReference>
<dbReference type="SUPFAM" id="SSF47917">
    <property type="entry name" value="C-terminal domain of alpha and beta subunits of F1 ATP synthase"/>
    <property type="match status" value="1"/>
</dbReference>
<dbReference type="SUPFAM" id="SSF50615">
    <property type="entry name" value="N-terminal domain of alpha and beta subunits of F1 ATP synthase"/>
    <property type="match status" value="1"/>
</dbReference>
<dbReference type="SUPFAM" id="SSF52540">
    <property type="entry name" value="P-loop containing nucleoside triphosphate hydrolases"/>
    <property type="match status" value="1"/>
</dbReference>
<dbReference type="PROSITE" id="PS00152">
    <property type="entry name" value="ATPASE_ALPHA_BETA"/>
    <property type="match status" value="1"/>
</dbReference>
<comment type="function">
    <text evidence="1">Produces ATP from ADP in the presence of a proton gradient across the membrane. The V-type alpha chain is a catalytic subunit.</text>
</comment>
<comment type="catalytic activity">
    <reaction evidence="1">
        <text>ATP + H2O + 4 H(+)(in) = ADP + phosphate + 5 H(+)(out)</text>
        <dbReference type="Rhea" id="RHEA:57720"/>
        <dbReference type="ChEBI" id="CHEBI:15377"/>
        <dbReference type="ChEBI" id="CHEBI:15378"/>
        <dbReference type="ChEBI" id="CHEBI:30616"/>
        <dbReference type="ChEBI" id="CHEBI:43474"/>
        <dbReference type="ChEBI" id="CHEBI:456216"/>
        <dbReference type="EC" id="7.1.2.2"/>
    </reaction>
</comment>
<comment type="similarity">
    <text evidence="1">Belongs to the ATPase alpha/beta chains family.</text>
</comment>
<protein>
    <recommendedName>
        <fullName evidence="1">V-type ATP synthase alpha chain</fullName>
        <ecNumber evidence="1">7.1.2.2</ecNumber>
    </recommendedName>
    <alternativeName>
        <fullName evidence="1">V-ATPase subunit A</fullName>
    </alternativeName>
</protein>
<organism>
    <name type="scientific">Clostridium perfringens (strain 13 / Type A)</name>
    <dbReference type="NCBI Taxonomy" id="195102"/>
    <lineage>
        <taxon>Bacteria</taxon>
        <taxon>Bacillati</taxon>
        <taxon>Bacillota</taxon>
        <taxon>Clostridia</taxon>
        <taxon>Eubacteriales</taxon>
        <taxon>Clostridiaceae</taxon>
        <taxon>Clostridium</taxon>
    </lineage>
</organism>
<sequence length="591" mass="64872">MKTGKIIKVSGPLVVAEGMDEANVYDVVKVGEKGLIGEIIEMRGDKASIQVYEETSGIGPGDPVITTGEPLSVELGPGLIESMFDGIQRPLDAFMKAANSAFLSKGVEVKSLNREKKWPFVPTAKVGDKVSAGDVIGTVQETAVVLHRIMVPFGVEGTIKEIKAGDFNVEEVIAVVETEKGDKNLTLMQKWPVRKGRPYARKLNPVEPMTTGQRVIDTFFPVAKGGAAAVPGPFGAGKTVVQHQVAKWGDTEIVVYVGCGERGNEMTDVLNEFPELKDPKTGESLMKRTVLIANTSNMPVAAREASIYTGITIAEYFRDMGYSVSIMADSTSRWAEALREMSGRLEEMPGDEGYPAYLGSRLADYYERAGKVVALGKDGREGAVTAIGAVSPPGGDISEPVTQSTLRIVKVFWGLDAQLAYKRHFPSINWLTSYSLYLEKMGEWMDAHVADDWSALRTEAMALLQEEANLEEIVRLVGMDALSEGDRLKLEVAKSIREDYLQQNAFHENDTYTSLNKQYKMLNLILSFKHEAEKALEAGVYLDKVLKLPVRDRIARSKYISEEEISKMDDILVELKSEMNKLISEGGVLNA</sequence>
<gene>
    <name evidence="1" type="primary">atpA</name>
    <name type="ordered locus">CPE1638</name>
</gene>
<name>VATA_CLOPE</name>
<evidence type="ECO:0000255" key="1">
    <source>
        <dbReference type="HAMAP-Rule" id="MF_00309"/>
    </source>
</evidence>
<keyword id="KW-0066">ATP synthesis</keyword>
<keyword id="KW-0067">ATP-binding</keyword>
<keyword id="KW-0375">Hydrogen ion transport</keyword>
<keyword id="KW-0406">Ion transport</keyword>
<keyword id="KW-0547">Nucleotide-binding</keyword>
<keyword id="KW-1185">Reference proteome</keyword>
<keyword id="KW-1278">Translocase</keyword>
<keyword id="KW-0813">Transport</keyword>
<reference key="1">
    <citation type="journal article" date="2002" name="Proc. Natl. Acad. Sci. U.S.A.">
        <title>Complete genome sequence of Clostridium perfringens, an anaerobic flesh-eater.</title>
        <authorList>
            <person name="Shimizu T."/>
            <person name="Ohtani K."/>
            <person name="Hirakawa H."/>
            <person name="Ohshima K."/>
            <person name="Yamashita A."/>
            <person name="Shiba T."/>
            <person name="Ogasawara N."/>
            <person name="Hattori M."/>
            <person name="Kuhara S."/>
            <person name="Hayashi H."/>
        </authorList>
    </citation>
    <scope>NUCLEOTIDE SEQUENCE [LARGE SCALE GENOMIC DNA]</scope>
    <source>
        <strain>13 / Type A</strain>
    </source>
</reference>